<dbReference type="EC" id="2.5.1.60"/>
<dbReference type="EMBL" id="X92183">
    <property type="protein sequence ID" value="CAA63094.1"/>
    <property type="molecule type" value="Genomic_DNA"/>
</dbReference>
<dbReference type="EMBL" id="CU329670">
    <property type="protein sequence ID" value="CAA22847.1"/>
    <property type="molecule type" value="Genomic_DNA"/>
</dbReference>
<dbReference type="PIR" id="S65091">
    <property type="entry name" value="S65091"/>
</dbReference>
<dbReference type="RefSeq" id="NP_593383.1">
    <property type="nucleotide sequence ID" value="NM_001018815.2"/>
</dbReference>
<dbReference type="SMR" id="P46960"/>
<dbReference type="FunCoup" id="P46960">
    <property type="interactions" value="51"/>
</dbReference>
<dbReference type="STRING" id="284812.P46960"/>
<dbReference type="PaxDb" id="4896-SPAC167.02.1"/>
<dbReference type="EnsemblFungi" id="SPAC167.02.1">
    <property type="protein sequence ID" value="SPAC167.02.1:pep"/>
    <property type="gene ID" value="SPAC167.02"/>
</dbReference>
<dbReference type="GeneID" id="2543284"/>
<dbReference type="KEGG" id="spo:2543284"/>
<dbReference type="PomBase" id="SPAC167.02">
    <property type="gene designation" value="ptb1"/>
</dbReference>
<dbReference type="VEuPathDB" id="FungiDB:SPAC167.02"/>
<dbReference type="eggNOG" id="KOG0366">
    <property type="taxonomic scope" value="Eukaryota"/>
</dbReference>
<dbReference type="HOGENOM" id="CLU_028946_3_0_1"/>
<dbReference type="InParanoid" id="P46960"/>
<dbReference type="OMA" id="VKRCQCP"/>
<dbReference type="PhylomeDB" id="P46960"/>
<dbReference type="Reactome" id="R-SPO-6803205">
    <property type="pathway name" value="TP53 regulates transcription of several additional cell death genes whose specific roles in p53-dependent apoptosis remain uncertain"/>
</dbReference>
<dbReference type="Reactome" id="R-SPO-8873719">
    <property type="pathway name" value="RAB geranylgeranylation"/>
</dbReference>
<dbReference type="PRO" id="PR:P46960"/>
<dbReference type="Proteomes" id="UP000002485">
    <property type="component" value="Chromosome I"/>
</dbReference>
<dbReference type="GO" id="GO:0005829">
    <property type="term" value="C:cytosol"/>
    <property type="evidence" value="ECO:0007005"/>
    <property type="project" value="PomBase"/>
</dbReference>
<dbReference type="GO" id="GO:0005634">
    <property type="term" value="C:nucleus"/>
    <property type="evidence" value="ECO:0007005"/>
    <property type="project" value="PomBase"/>
</dbReference>
<dbReference type="GO" id="GO:0005968">
    <property type="term" value="C:Rab-protein geranylgeranyltransferase complex"/>
    <property type="evidence" value="ECO:0000250"/>
    <property type="project" value="UniProtKB"/>
</dbReference>
<dbReference type="GO" id="GO:0004663">
    <property type="term" value="F:Rab geranylgeranyltransferase activity"/>
    <property type="evidence" value="ECO:0000250"/>
    <property type="project" value="UniProtKB"/>
</dbReference>
<dbReference type="GO" id="GO:0031267">
    <property type="term" value="F:small GTPase binding"/>
    <property type="evidence" value="ECO:0000250"/>
    <property type="project" value="UniProtKB"/>
</dbReference>
<dbReference type="GO" id="GO:0008270">
    <property type="term" value="F:zinc ion binding"/>
    <property type="evidence" value="ECO:0000250"/>
    <property type="project" value="UniProtKB"/>
</dbReference>
<dbReference type="GO" id="GO:0006888">
    <property type="term" value="P:endoplasmic reticulum to Golgi vesicle-mediated transport"/>
    <property type="evidence" value="ECO:0000318"/>
    <property type="project" value="GO_Central"/>
</dbReference>
<dbReference type="GO" id="GO:0018344">
    <property type="term" value="P:protein geranylgeranylation"/>
    <property type="evidence" value="ECO:0000250"/>
    <property type="project" value="UniProtKB"/>
</dbReference>
<dbReference type="GO" id="GO:0072659">
    <property type="term" value="P:protein localization to plasma membrane"/>
    <property type="evidence" value="ECO:0000305"/>
    <property type="project" value="PomBase"/>
</dbReference>
<dbReference type="CDD" id="cd02894">
    <property type="entry name" value="GGTase-II"/>
    <property type="match status" value="1"/>
</dbReference>
<dbReference type="FunFam" id="1.50.10.20:FF:000012">
    <property type="entry name" value="Geranylgeranyl transferase type-2 subunit beta"/>
    <property type="match status" value="1"/>
</dbReference>
<dbReference type="Gene3D" id="1.50.10.20">
    <property type="match status" value="1"/>
</dbReference>
<dbReference type="InterPro" id="IPR045089">
    <property type="entry name" value="PGGT1B-like"/>
</dbReference>
<dbReference type="InterPro" id="IPR001330">
    <property type="entry name" value="Prenyltrans"/>
</dbReference>
<dbReference type="InterPro" id="IPR026873">
    <property type="entry name" value="Ptb1"/>
</dbReference>
<dbReference type="InterPro" id="IPR008930">
    <property type="entry name" value="Terpenoid_cyclase/PrenylTrfase"/>
</dbReference>
<dbReference type="PANTHER" id="PTHR11774">
    <property type="entry name" value="GERANYLGERANYL TRANSFERASE TYPE BETA SUBUNIT"/>
    <property type="match status" value="1"/>
</dbReference>
<dbReference type="PANTHER" id="PTHR11774:SF11">
    <property type="entry name" value="GERANYLGERANYL TRANSFERASE TYPE-2 SUBUNIT BETA"/>
    <property type="match status" value="1"/>
</dbReference>
<dbReference type="Pfam" id="PF00432">
    <property type="entry name" value="Prenyltrans"/>
    <property type="match status" value="1"/>
</dbReference>
<dbReference type="SUPFAM" id="SSF48239">
    <property type="entry name" value="Terpenoid cyclases/Protein prenyltransferases"/>
    <property type="match status" value="1"/>
</dbReference>
<evidence type="ECO:0000250" key="1"/>
<evidence type="ECO:0000305" key="2"/>
<gene>
    <name type="primary">ptb1</name>
    <name type="ORF">SPAC167.02</name>
</gene>
<reference key="1">
    <citation type="journal article" date="1996" name="Yeast">
        <title>Sequence of ptb1, a gene for the beta subunit of the type-II geranylgeranyltransferase from the fission yeast Schizosaccharomyces pombe.</title>
        <authorList>
            <person name="Godfrey R."/>
            <person name="Davey J."/>
        </authorList>
    </citation>
    <scope>NUCLEOTIDE SEQUENCE [GENOMIC DNA]</scope>
</reference>
<reference key="2">
    <citation type="journal article" date="2002" name="Nature">
        <title>The genome sequence of Schizosaccharomyces pombe.</title>
        <authorList>
            <person name="Wood V."/>
            <person name="Gwilliam R."/>
            <person name="Rajandream M.A."/>
            <person name="Lyne M.H."/>
            <person name="Lyne R."/>
            <person name="Stewart A."/>
            <person name="Sgouros J.G."/>
            <person name="Peat N."/>
            <person name="Hayles J."/>
            <person name="Baker S.G."/>
            <person name="Basham D."/>
            <person name="Bowman S."/>
            <person name="Brooks K."/>
            <person name="Brown D."/>
            <person name="Brown S."/>
            <person name="Chillingworth T."/>
            <person name="Churcher C.M."/>
            <person name="Collins M."/>
            <person name="Connor R."/>
            <person name="Cronin A."/>
            <person name="Davis P."/>
            <person name="Feltwell T."/>
            <person name="Fraser A."/>
            <person name="Gentles S."/>
            <person name="Goble A."/>
            <person name="Hamlin N."/>
            <person name="Harris D.E."/>
            <person name="Hidalgo J."/>
            <person name="Hodgson G."/>
            <person name="Holroyd S."/>
            <person name="Hornsby T."/>
            <person name="Howarth S."/>
            <person name="Huckle E.J."/>
            <person name="Hunt S."/>
            <person name="Jagels K."/>
            <person name="James K.D."/>
            <person name="Jones L."/>
            <person name="Jones M."/>
            <person name="Leather S."/>
            <person name="McDonald S."/>
            <person name="McLean J."/>
            <person name="Mooney P."/>
            <person name="Moule S."/>
            <person name="Mungall K.L."/>
            <person name="Murphy L.D."/>
            <person name="Niblett D."/>
            <person name="Odell C."/>
            <person name="Oliver K."/>
            <person name="O'Neil S."/>
            <person name="Pearson D."/>
            <person name="Quail M.A."/>
            <person name="Rabbinowitsch E."/>
            <person name="Rutherford K.M."/>
            <person name="Rutter S."/>
            <person name="Saunders D."/>
            <person name="Seeger K."/>
            <person name="Sharp S."/>
            <person name="Skelton J."/>
            <person name="Simmonds M.N."/>
            <person name="Squares R."/>
            <person name="Squares S."/>
            <person name="Stevens K."/>
            <person name="Taylor K."/>
            <person name="Taylor R.G."/>
            <person name="Tivey A."/>
            <person name="Walsh S.V."/>
            <person name="Warren T."/>
            <person name="Whitehead S."/>
            <person name="Woodward J.R."/>
            <person name="Volckaert G."/>
            <person name="Aert R."/>
            <person name="Robben J."/>
            <person name="Grymonprez B."/>
            <person name="Weltjens I."/>
            <person name="Vanstreels E."/>
            <person name="Rieger M."/>
            <person name="Schaefer M."/>
            <person name="Mueller-Auer S."/>
            <person name="Gabel C."/>
            <person name="Fuchs M."/>
            <person name="Duesterhoeft A."/>
            <person name="Fritzc C."/>
            <person name="Holzer E."/>
            <person name="Moestl D."/>
            <person name="Hilbert H."/>
            <person name="Borzym K."/>
            <person name="Langer I."/>
            <person name="Beck A."/>
            <person name="Lehrach H."/>
            <person name="Reinhardt R."/>
            <person name="Pohl T.M."/>
            <person name="Eger P."/>
            <person name="Zimmermann W."/>
            <person name="Wedler H."/>
            <person name="Wambutt R."/>
            <person name="Purnelle B."/>
            <person name="Goffeau A."/>
            <person name="Cadieu E."/>
            <person name="Dreano S."/>
            <person name="Gloux S."/>
            <person name="Lelaure V."/>
            <person name="Mottier S."/>
            <person name="Galibert F."/>
            <person name="Aves S.J."/>
            <person name="Xiang Z."/>
            <person name="Hunt C."/>
            <person name="Moore K."/>
            <person name="Hurst S.M."/>
            <person name="Lucas M."/>
            <person name="Rochet M."/>
            <person name="Gaillardin C."/>
            <person name="Tallada V.A."/>
            <person name="Garzon A."/>
            <person name="Thode G."/>
            <person name="Daga R.R."/>
            <person name="Cruzado L."/>
            <person name="Jimenez J."/>
            <person name="Sanchez M."/>
            <person name="del Rey F."/>
            <person name="Benito J."/>
            <person name="Dominguez A."/>
            <person name="Revuelta J.L."/>
            <person name="Moreno S."/>
            <person name="Armstrong J."/>
            <person name="Forsburg S.L."/>
            <person name="Cerutti L."/>
            <person name="Lowe T."/>
            <person name="McCombie W.R."/>
            <person name="Paulsen I."/>
            <person name="Potashkin J."/>
            <person name="Shpakovski G.V."/>
            <person name="Ussery D."/>
            <person name="Barrell B.G."/>
            <person name="Nurse P."/>
        </authorList>
    </citation>
    <scope>NUCLEOTIDE SEQUENCE [LARGE SCALE GENOMIC DNA]</scope>
    <source>
        <strain>972 / ATCC 24843</strain>
    </source>
</reference>
<proteinExistence type="inferred from homology"/>
<organism>
    <name type="scientific">Schizosaccharomyces pombe (strain 972 / ATCC 24843)</name>
    <name type="common">Fission yeast</name>
    <dbReference type="NCBI Taxonomy" id="284812"/>
    <lineage>
        <taxon>Eukaryota</taxon>
        <taxon>Fungi</taxon>
        <taxon>Dikarya</taxon>
        <taxon>Ascomycota</taxon>
        <taxon>Taphrinomycotina</taxon>
        <taxon>Schizosaccharomycetes</taxon>
        <taxon>Schizosaccharomycetales</taxon>
        <taxon>Schizosaccharomycetaceae</taxon>
        <taxon>Schizosaccharomyces</taxon>
    </lineage>
</organism>
<keyword id="KW-0479">Metal-binding</keyword>
<keyword id="KW-0637">Prenyltransferase</keyword>
<keyword id="KW-1185">Reference proteome</keyword>
<keyword id="KW-0677">Repeat</keyword>
<keyword id="KW-0808">Transferase</keyword>
<keyword id="KW-0862">Zinc</keyword>
<accession>P46960</accession>
<comment type="function">
    <text>Catalyzes the transfer of a geranyl-geranyl moiety from geranyl-geranyl pyrophosphate to proteins having the C-terminal -XCC or -XCXC, where both cysteines may become modified.</text>
</comment>
<comment type="catalytic activity">
    <reaction>
        <text>geranylgeranyl diphosphate + L-cysteinyl-[protein] = S-geranylgeranyl-L-cysteinyl-[protein] + diphosphate</text>
        <dbReference type="Rhea" id="RHEA:21240"/>
        <dbReference type="Rhea" id="RHEA-COMP:10131"/>
        <dbReference type="Rhea" id="RHEA-COMP:11537"/>
        <dbReference type="ChEBI" id="CHEBI:29950"/>
        <dbReference type="ChEBI" id="CHEBI:33019"/>
        <dbReference type="ChEBI" id="CHEBI:57533"/>
        <dbReference type="ChEBI" id="CHEBI:86021"/>
        <dbReference type="EC" id="2.5.1.60"/>
    </reaction>
</comment>
<comment type="cofactor">
    <cofactor evidence="1">
        <name>Zn(2+)</name>
        <dbReference type="ChEBI" id="CHEBI:29105"/>
    </cofactor>
    <text evidence="1">Binds 1 zinc ion per subunit.</text>
</comment>
<comment type="subunit">
    <text>Heterodimer of an alpha and a beta subunit.</text>
</comment>
<comment type="similarity">
    <text evidence="2">Belongs to the protein prenyltransferase subunit beta family.</text>
</comment>
<protein>
    <recommendedName>
        <fullName>Geranylgeranyl transferase type-2 subunit beta</fullName>
        <ecNumber>2.5.1.60</ecNumber>
    </recommendedName>
    <alternativeName>
        <fullName>Geranylgeranyl transferase type II subunit beta</fullName>
        <shortName>GGTase-II-beta</shortName>
    </alternativeName>
    <alternativeName>
        <fullName>Type II protein geranyl-geranyltransferase subunit beta</fullName>
    </alternativeName>
</protein>
<name>PGTB2_SCHPO</name>
<sequence>MAVLLRDKHISYLHDIGNRTDELDFWLKEHLHVSAIYWSCMSFWLLKKKDQIDKERIVSFLLSCLTESGGFACYPGHDDHITNTVYAVQVLAMLDSLHVVDKDKVASYIIGLQNEDGSMKGDRWGEIDARFLYSGINCLAILGKLDYLNKNTAVDWLMKCYNFDGGFGLCPGAESHGAMVFTCVAALKILNKLDLIDEELLGWWISERQVKGGGLNGRPEKLPDSCYGWWDLSPLAIIGKLDWIDRNQLIDFLLGTQDADSGGFADRKEDATDVYHTCFSLAGLSLLQFPNIEPVDPRFCLPLEVTQKMKL</sequence>
<feature type="chain" id="PRO_0000119779" description="Geranylgeranyl transferase type-2 subunit beta">
    <location>
        <begin position="1"/>
        <end position="311"/>
    </location>
</feature>
<feature type="repeat" description="PFTB 1">
    <location>
        <begin position="54"/>
        <end position="95"/>
    </location>
</feature>
<feature type="repeat" description="PFTB 2">
    <location>
        <begin position="102"/>
        <end position="143"/>
    </location>
</feature>
<feature type="repeat" description="PFTB 3">
    <location>
        <begin position="150"/>
        <end position="191"/>
    </location>
</feature>
<feature type="repeat" description="PFTB 4">
    <location>
        <begin position="197"/>
        <end position="239"/>
    </location>
</feature>
<feature type="repeat" description="PFTB 5">
    <location>
        <begin position="246"/>
        <end position="288"/>
    </location>
</feature>
<feature type="binding site" evidence="1">
    <location>
        <begin position="176"/>
        <end position="178"/>
    </location>
    <ligand>
        <name>geranylgeranyl diphosphate</name>
        <dbReference type="ChEBI" id="CHEBI:57533"/>
    </ligand>
</feature>
<feature type="binding site" evidence="1">
    <location>
        <begin position="218"/>
        <end position="230"/>
    </location>
    <ligand>
        <name>geranylgeranyl diphosphate</name>
        <dbReference type="ChEBI" id="CHEBI:57533"/>
    </ligand>
</feature>
<feature type="binding site" evidence="1">
    <location>
        <position position="224"/>
    </location>
    <ligand>
        <name>Zn(2+)</name>
        <dbReference type="ChEBI" id="CHEBI:29105"/>
        <note>catalytic</note>
    </ligand>
</feature>
<feature type="binding site" evidence="1">
    <location>
        <position position="226"/>
    </location>
    <ligand>
        <name>Zn(2+)</name>
        <dbReference type="ChEBI" id="CHEBI:29105"/>
        <note>catalytic</note>
    </ligand>
</feature>
<feature type="binding site" evidence="1">
    <location>
        <position position="276"/>
    </location>
    <ligand>
        <name>Zn(2+)</name>
        <dbReference type="ChEBI" id="CHEBI:29105"/>
        <note>catalytic</note>
    </ligand>
</feature>